<organism>
    <name type="scientific">Prochlorococcus marinus (strain MIT 9301)</name>
    <dbReference type="NCBI Taxonomy" id="167546"/>
    <lineage>
        <taxon>Bacteria</taxon>
        <taxon>Bacillati</taxon>
        <taxon>Cyanobacteriota</taxon>
        <taxon>Cyanophyceae</taxon>
        <taxon>Synechococcales</taxon>
        <taxon>Prochlorococcaceae</taxon>
        <taxon>Prochlorococcus</taxon>
    </lineage>
</organism>
<proteinExistence type="inferred from homology"/>
<feature type="chain" id="PRO_1000062550" description="Urease accessory protein UreE">
    <location>
        <begin position="1"/>
        <end position="149"/>
    </location>
</feature>
<reference key="1">
    <citation type="journal article" date="2007" name="PLoS Genet.">
        <title>Patterns and implications of gene gain and loss in the evolution of Prochlorococcus.</title>
        <authorList>
            <person name="Kettler G.C."/>
            <person name="Martiny A.C."/>
            <person name="Huang K."/>
            <person name="Zucker J."/>
            <person name="Coleman M.L."/>
            <person name="Rodrigue S."/>
            <person name="Chen F."/>
            <person name="Lapidus A."/>
            <person name="Ferriera S."/>
            <person name="Johnson J."/>
            <person name="Steglich C."/>
            <person name="Church G.M."/>
            <person name="Richardson P."/>
            <person name="Chisholm S.W."/>
        </authorList>
    </citation>
    <scope>NUCLEOTIDE SEQUENCE [LARGE SCALE GENOMIC DNA]</scope>
    <source>
        <strain>MIT 9301</strain>
    </source>
</reference>
<accession>A3PCN7</accession>
<gene>
    <name evidence="1" type="primary">ureE</name>
    <name type="ordered locus">P9301_08891</name>
</gene>
<sequence length="149" mass="17323">MRMNKQIVVTDWIKEKPKLGSFLKLTLSSDERRILRGKRLTDCDQEIILQLPREGKLNDGDILSTNKSNFYVEIVAKKENLIEISSNSKIELIKTAYHLGNRHVELEIEEGILLTKSDYVIKNMLLNFKVNIKNTKKKFFPERGAHSHE</sequence>
<dbReference type="EMBL" id="CP000576">
    <property type="protein sequence ID" value="ABO17512.1"/>
    <property type="molecule type" value="Genomic_DNA"/>
</dbReference>
<dbReference type="RefSeq" id="WP_011862861.1">
    <property type="nucleotide sequence ID" value="NC_009091.1"/>
</dbReference>
<dbReference type="SMR" id="A3PCN7"/>
<dbReference type="STRING" id="167546.P9301_08891"/>
<dbReference type="KEGG" id="pmg:P9301_08891"/>
<dbReference type="eggNOG" id="COG2371">
    <property type="taxonomic scope" value="Bacteria"/>
</dbReference>
<dbReference type="HOGENOM" id="CLU_093757_2_0_3"/>
<dbReference type="OrthoDB" id="5421304at2"/>
<dbReference type="Proteomes" id="UP000001430">
    <property type="component" value="Chromosome"/>
</dbReference>
<dbReference type="GO" id="GO:0005737">
    <property type="term" value="C:cytoplasm"/>
    <property type="evidence" value="ECO:0007669"/>
    <property type="project" value="UniProtKB-SubCell"/>
</dbReference>
<dbReference type="GO" id="GO:0016151">
    <property type="term" value="F:nickel cation binding"/>
    <property type="evidence" value="ECO:0007669"/>
    <property type="project" value="UniProtKB-UniRule"/>
</dbReference>
<dbReference type="GO" id="GO:0051082">
    <property type="term" value="F:unfolded protein binding"/>
    <property type="evidence" value="ECO:0007669"/>
    <property type="project" value="UniProtKB-UniRule"/>
</dbReference>
<dbReference type="GO" id="GO:0006457">
    <property type="term" value="P:protein folding"/>
    <property type="evidence" value="ECO:0007669"/>
    <property type="project" value="InterPro"/>
</dbReference>
<dbReference type="GO" id="GO:0065003">
    <property type="term" value="P:protein-containing complex assembly"/>
    <property type="evidence" value="ECO:0007669"/>
    <property type="project" value="InterPro"/>
</dbReference>
<dbReference type="GO" id="GO:0019627">
    <property type="term" value="P:urea metabolic process"/>
    <property type="evidence" value="ECO:0007669"/>
    <property type="project" value="InterPro"/>
</dbReference>
<dbReference type="CDD" id="cd00571">
    <property type="entry name" value="UreE"/>
    <property type="match status" value="1"/>
</dbReference>
<dbReference type="Gene3D" id="2.60.260.20">
    <property type="entry name" value="Urease metallochaperone UreE, N-terminal domain"/>
    <property type="match status" value="1"/>
</dbReference>
<dbReference type="Gene3D" id="3.30.70.790">
    <property type="entry name" value="UreE, C-terminal domain"/>
    <property type="match status" value="1"/>
</dbReference>
<dbReference type="HAMAP" id="MF_00822">
    <property type="entry name" value="UreE"/>
    <property type="match status" value="1"/>
</dbReference>
<dbReference type="InterPro" id="IPR012406">
    <property type="entry name" value="UreE"/>
</dbReference>
<dbReference type="InterPro" id="IPR007864">
    <property type="entry name" value="UreE_C_dom"/>
</dbReference>
<dbReference type="InterPro" id="IPR004029">
    <property type="entry name" value="UreE_N"/>
</dbReference>
<dbReference type="InterPro" id="IPR036118">
    <property type="entry name" value="UreE_N_sf"/>
</dbReference>
<dbReference type="NCBIfam" id="NF009756">
    <property type="entry name" value="PRK13261.2-2"/>
    <property type="match status" value="1"/>
</dbReference>
<dbReference type="Pfam" id="PF05194">
    <property type="entry name" value="UreE_C"/>
    <property type="match status" value="1"/>
</dbReference>
<dbReference type="PIRSF" id="PIRSF036402">
    <property type="entry name" value="Ureas_acces_UreE"/>
    <property type="match status" value="1"/>
</dbReference>
<dbReference type="SMART" id="SM00988">
    <property type="entry name" value="UreE_N"/>
    <property type="match status" value="1"/>
</dbReference>
<dbReference type="SUPFAM" id="SSF69737">
    <property type="entry name" value="Urease metallochaperone UreE, C-terminal domain"/>
    <property type="match status" value="1"/>
</dbReference>
<dbReference type="SUPFAM" id="SSF69287">
    <property type="entry name" value="Urease metallochaperone UreE, N-terminal domain"/>
    <property type="match status" value="1"/>
</dbReference>
<name>UREE_PROM0</name>
<keyword id="KW-0143">Chaperone</keyword>
<keyword id="KW-0963">Cytoplasm</keyword>
<keyword id="KW-0533">Nickel</keyword>
<keyword id="KW-0996">Nickel insertion</keyword>
<keyword id="KW-1185">Reference proteome</keyword>
<comment type="function">
    <text evidence="1">Involved in urease metallocenter assembly. Binds nickel. Probably functions as a nickel donor during metallocenter assembly.</text>
</comment>
<comment type="subcellular location">
    <subcellularLocation>
        <location evidence="1">Cytoplasm</location>
    </subcellularLocation>
</comment>
<comment type="similarity">
    <text evidence="1">Belongs to the UreE family.</text>
</comment>
<evidence type="ECO:0000255" key="1">
    <source>
        <dbReference type="HAMAP-Rule" id="MF_00822"/>
    </source>
</evidence>
<protein>
    <recommendedName>
        <fullName evidence="1">Urease accessory protein UreE</fullName>
    </recommendedName>
</protein>